<evidence type="ECO:0000255" key="1"/>
<name>YR473_MIMIV</name>
<sequence>MNILSPIIIIIILIVLFYVMRMYNYQNKEPNKEPNKENMKQLNFRNRNNSNHNFIPKPLKKITNRNCHKIRKNILNNKFQTSDSIDLDNVIDLIYSKFVVRVDDFNFANKPTTNRKFDKHNSNDKILMKNIISNINEWNILFQKYSIESVYIDDIHISNILETENECILTVRAILIHGSQKYHIEMNFYGVKDRYDDFFTTKACNYNVVLFSIEHISSRQYHEKSTIDNPFMTMEQQLEYVKYIEKIHQDEINDN</sequence>
<organismHost>
    <name type="scientific">Acanthamoeba polyphaga</name>
    <name type="common">Amoeba</name>
    <dbReference type="NCBI Taxonomy" id="5757"/>
</organismHost>
<organism>
    <name type="scientific">Acanthamoeba polyphaga mimivirus</name>
    <name type="common">APMV</name>
    <dbReference type="NCBI Taxonomy" id="212035"/>
    <lineage>
        <taxon>Viruses</taxon>
        <taxon>Varidnaviria</taxon>
        <taxon>Bamfordvirae</taxon>
        <taxon>Nucleocytoviricota</taxon>
        <taxon>Megaviricetes</taxon>
        <taxon>Imitervirales</taxon>
        <taxon>Mimiviridae</taxon>
        <taxon>Megamimivirinae</taxon>
        <taxon>Mimivirus</taxon>
        <taxon>Mimivirus bradfordmassiliense</taxon>
    </lineage>
</organism>
<proteinExistence type="inferred from homology"/>
<protein>
    <recommendedName>
        <fullName>Uncharacterized protein R473</fullName>
    </recommendedName>
</protein>
<reference key="1">
    <citation type="journal article" date="2004" name="Science">
        <title>The 1.2-megabase genome sequence of Mimivirus.</title>
        <authorList>
            <person name="Raoult D."/>
            <person name="Audic S."/>
            <person name="Robert C."/>
            <person name="Abergel C."/>
            <person name="Renesto P."/>
            <person name="Ogata H."/>
            <person name="La Scola B."/>
            <person name="Susan M."/>
            <person name="Claverie J.-M."/>
        </authorList>
    </citation>
    <scope>NUCLEOTIDE SEQUENCE [LARGE SCALE GENOMIC DNA]</scope>
    <source>
        <strain>Rowbotham-Bradford</strain>
    </source>
</reference>
<dbReference type="EMBL" id="AY653733">
    <property type="protein sequence ID" value="AAV50739.1"/>
    <property type="molecule type" value="Genomic_DNA"/>
</dbReference>
<dbReference type="SMR" id="Q5UQE3"/>
<dbReference type="KEGG" id="vg:9925098"/>
<dbReference type="OrthoDB" id="37087at10239"/>
<dbReference type="Proteomes" id="UP000001134">
    <property type="component" value="Genome"/>
</dbReference>
<gene>
    <name type="ordered locus">MIMI_R473</name>
</gene>
<accession>Q5UQE3</accession>
<feature type="signal peptide" evidence="1">
    <location>
        <begin position="1"/>
        <end position="22"/>
    </location>
</feature>
<feature type="chain" id="PRO_0000243991" description="Uncharacterized protein R473">
    <location>
        <begin position="23"/>
        <end position="255"/>
    </location>
</feature>
<keyword id="KW-1185">Reference proteome</keyword>
<keyword id="KW-0732">Signal</keyword>